<reference key="1">
    <citation type="submission" date="2005-10" db="EMBL/GenBank/DDBJ databases">
        <title>Complete sequence of chromosome 2 of Burkholderia sp. 383.</title>
        <authorList>
            <consortium name="US DOE Joint Genome Institute"/>
            <person name="Copeland A."/>
            <person name="Lucas S."/>
            <person name="Lapidus A."/>
            <person name="Barry K."/>
            <person name="Detter J.C."/>
            <person name="Glavina T."/>
            <person name="Hammon N."/>
            <person name="Israni S."/>
            <person name="Pitluck S."/>
            <person name="Chain P."/>
            <person name="Malfatti S."/>
            <person name="Shin M."/>
            <person name="Vergez L."/>
            <person name="Schmutz J."/>
            <person name="Larimer F."/>
            <person name="Land M."/>
            <person name="Kyrpides N."/>
            <person name="Lykidis A."/>
            <person name="Richardson P."/>
        </authorList>
    </citation>
    <scope>NUCLEOTIDE SEQUENCE [LARGE SCALE GENOMIC DNA]</scope>
    <source>
        <strain>ATCC 17760 / DSM 23089 / LMG 22485 / NCIMB 9086 / R18194 / 383</strain>
    </source>
</reference>
<dbReference type="EC" id="2.2.1.7" evidence="1"/>
<dbReference type="EMBL" id="CP000152">
    <property type="protein sequence ID" value="ABB12322.1"/>
    <property type="status" value="ALT_INIT"/>
    <property type="molecule type" value="Genomic_DNA"/>
</dbReference>
<dbReference type="RefSeq" id="WP_011355804.1">
    <property type="nucleotide sequence ID" value="NZ_WNDV01000006.1"/>
</dbReference>
<dbReference type="SMR" id="Q393P4"/>
<dbReference type="GeneID" id="45098536"/>
<dbReference type="KEGG" id="bur:Bcep18194_B2211"/>
<dbReference type="PATRIC" id="fig|482957.22.peg.5970"/>
<dbReference type="HOGENOM" id="CLU_009227_1_4_4"/>
<dbReference type="UniPathway" id="UPA00064">
    <property type="reaction ID" value="UER00091"/>
</dbReference>
<dbReference type="Proteomes" id="UP000002705">
    <property type="component" value="Chromosome 2"/>
</dbReference>
<dbReference type="GO" id="GO:0005829">
    <property type="term" value="C:cytosol"/>
    <property type="evidence" value="ECO:0007669"/>
    <property type="project" value="TreeGrafter"/>
</dbReference>
<dbReference type="GO" id="GO:0008661">
    <property type="term" value="F:1-deoxy-D-xylulose-5-phosphate synthase activity"/>
    <property type="evidence" value="ECO:0007669"/>
    <property type="project" value="UniProtKB-UniRule"/>
</dbReference>
<dbReference type="GO" id="GO:0000287">
    <property type="term" value="F:magnesium ion binding"/>
    <property type="evidence" value="ECO:0007669"/>
    <property type="project" value="UniProtKB-UniRule"/>
</dbReference>
<dbReference type="GO" id="GO:0030976">
    <property type="term" value="F:thiamine pyrophosphate binding"/>
    <property type="evidence" value="ECO:0007669"/>
    <property type="project" value="UniProtKB-UniRule"/>
</dbReference>
<dbReference type="GO" id="GO:0052865">
    <property type="term" value="P:1-deoxy-D-xylulose 5-phosphate biosynthetic process"/>
    <property type="evidence" value="ECO:0007669"/>
    <property type="project" value="UniProtKB-UniPathway"/>
</dbReference>
<dbReference type="GO" id="GO:0019288">
    <property type="term" value="P:isopentenyl diphosphate biosynthetic process, methylerythritol 4-phosphate pathway"/>
    <property type="evidence" value="ECO:0007669"/>
    <property type="project" value="TreeGrafter"/>
</dbReference>
<dbReference type="GO" id="GO:0016114">
    <property type="term" value="P:terpenoid biosynthetic process"/>
    <property type="evidence" value="ECO:0007669"/>
    <property type="project" value="UniProtKB-UniRule"/>
</dbReference>
<dbReference type="GO" id="GO:0009228">
    <property type="term" value="P:thiamine biosynthetic process"/>
    <property type="evidence" value="ECO:0007669"/>
    <property type="project" value="UniProtKB-UniRule"/>
</dbReference>
<dbReference type="CDD" id="cd02007">
    <property type="entry name" value="TPP_DXS"/>
    <property type="match status" value="1"/>
</dbReference>
<dbReference type="CDD" id="cd07033">
    <property type="entry name" value="TPP_PYR_DXS_TK_like"/>
    <property type="match status" value="1"/>
</dbReference>
<dbReference type="FunFam" id="3.40.50.920:FF:000002">
    <property type="entry name" value="1-deoxy-D-xylulose-5-phosphate synthase"/>
    <property type="match status" value="1"/>
</dbReference>
<dbReference type="FunFam" id="3.40.50.970:FF:000005">
    <property type="entry name" value="1-deoxy-D-xylulose-5-phosphate synthase"/>
    <property type="match status" value="1"/>
</dbReference>
<dbReference type="Gene3D" id="3.40.50.920">
    <property type="match status" value="1"/>
</dbReference>
<dbReference type="Gene3D" id="3.40.50.970">
    <property type="match status" value="2"/>
</dbReference>
<dbReference type="HAMAP" id="MF_00315">
    <property type="entry name" value="DXP_synth"/>
    <property type="match status" value="1"/>
</dbReference>
<dbReference type="InterPro" id="IPR005477">
    <property type="entry name" value="Dxylulose-5-P_synthase"/>
</dbReference>
<dbReference type="InterPro" id="IPR029061">
    <property type="entry name" value="THDP-binding"/>
</dbReference>
<dbReference type="InterPro" id="IPR009014">
    <property type="entry name" value="Transketo_C/PFOR_II"/>
</dbReference>
<dbReference type="InterPro" id="IPR005475">
    <property type="entry name" value="Transketolase-like_Pyr-bd"/>
</dbReference>
<dbReference type="InterPro" id="IPR020826">
    <property type="entry name" value="Transketolase_BS"/>
</dbReference>
<dbReference type="InterPro" id="IPR033248">
    <property type="entry name" value="Transketolase_C"/>
</dbReference>
<dbReference type="InterPro" id="IPR049557">
    <property type="entry name" value="Transketolase_CS"/>
</dbReference>
<dbReference type="NCBIfam" id="TIGR00204">
    <property type="entry name" value="dxs"/>
    <property type="match status" value="1"/>
</dbReference>
<dbReference type="NCBIfam" id="NF003933">
    <property type="entry name" value="PRK05444.2-2"/>
    <property type="match status" value="1"/>
</dbReference>
<dbReference type="PANTHER" id="PTHR43322">
    <property type="entry name" value="1-D-DEOXYXYLULOSE 5-PHOSPHATE SYNTHASE-RELATED"/>
    <property type="match status" value="1"/>
</dbReference>
<dbReference type="PANTHER" id="PTHR43322:SF5">
    <property type="entry name" value="1-DEOXY-D-XYLULOSE-5-PHOSPHATE SYNTHASE, CHLOROPLASTIC"/>
    <property type="match status" value="1"/>
</dbReference>
<dbReference type="Pfam" id="PF13292">
    <property type="entry name" value="DXP_synthase_N"/>
    <property type="match status" value="1"/>
</dbReference>
<dbReference type="Pfam" id="PF02779">
    <property type="entry name" value="Transket_pyr"/>
    <property type="match status" value="1"/>
</dbReference>
<dbReference type="Pfam" id="PF02780">
    <property type="entry name" value="Transketolase_C"/>
    <property type="match status" value="1"/>
</dbReference>
<dbReference type="SMART" id="SM00861">
    <property type="entry name" value="Transket_pyr"/>
    <property type="match status" value="1"/>
</dbReference>
<dbReference type="SUPFAM" id="SSF52518">
    <property type="entry name" value="Thiamin diphosphate-binding fold (THDP-binding)"/>
    <property type="match status" value="2"/>
</dbReference>
<dbReference type="SUPFAM" id="SSF52922">
    <property type="entry name" value="TK C-terminal domain-like"/>
    <property type="match status" value="1"/>
</dbReference>
<dbReference type="PROSITE" id="PS00801">
    <property type="entry name" value="TRANSKETOLASE_1"/>
    <property type="match status" value="1"/>
</dbReference>
<dbReference type="PROSITE" id="PS00802">
    <property type="entry name" value="TRANSKETOLASE_2"/>
    <property type="match status" value="1"/>
</dbReference>
<proteinExistence type="inferred from homology"/>
<sequence>MYDLLKTIDDPADLRRLDRRQLQPLADELRAFVLDSVSKTGGHLSSNLGTVELTIALHYVFNTPNDRIVWDVGHQTYPHKILTGRRDQMHSLRQQDGISGFPRRSESEYDTFGTAHSSTSISAALGMAIGSQLNGDDRFSIAVIGDGAMTAGMAFEAMNNAGVSEDAKVLVILNDNDMSISPPVGALNRHLARLMSGRFYAAARAGVERVLSVAPPVLELARKLEEHAKGMVVPATLFEEFGFNYIGPIDGHDLDSLIPTLQNIRELRGPQFLHVVTKKGQGYKLAEADPVLYHGPGKFNPAEGIKPSTTPAKKTYTQVFGEWLCDEAERDTRVVGITPAMREGSGMVEFEKRFKDRYYDVGIAEQHAVTFAGGMATEGLKPVVAIYSTFLQRAYDQLIHDVALQNLPVVFAIDRAGLVGADGATHAGAYDLAFMRCIPNMTIMAASDENECRQMLHTALQQPNPTAVRYPRGAGTGVPTVKEFTEIPLGKGEVRRQTSQPEGKRVAILAFGTMVAPSLAAAEELDATVANMRFVKPVDAALVRELAETHDYLVTVEEGCVMGGAGSACVEALMESGVIRPVLQLGLPDLFIDHGDPAKLLSQCGLDGAGIAKSIRERFLNPAADVAGQAKRVA</sequence>
<keyword id="KW-0414">Isoprene biosynthesis</keyword>
<keyword id="KW-0460">Magnesium</keyword>
<keyword id="KW-0479">Metal-binding</keyword>
<keyword id="KW-0784">Thiamine biosynthesis</keyword>
<keyword id="KW-0786">Thiamine pyrophosphate</keyword>
<keyword id="KW-0808">Transferase</keyword>
<evidence type="ECO:0000255" key="1">
    <source>
        <dbReference type="HAMAP-Rule" id="MF_00315"/>
    </source>
</evidence>
<evidence type="ECO:0000305" key="2"/>
<name>DXS_BURL3</name>
<protein>
    <recommendedName>
        <fullName evidence="1">1-deoxy-D-xylulose-5-phosphate synthase</fullName>
        <ecNumber evidence="1">2.2.1.7</ecNumber>
    </recommendedName>
    <alternativeName>
        <fullName evidence="1">1-deoxyxylulose-5-phosphate synthase</fullName>
        <shortName evidence="1">DXP synthase</shortName>
        <shortName evidence="1">DXPS</shortName>
    </alternativeName>
</protein>
<comment type="function">
    <text evidence="1">Catalyzes the acyloin condensation reaction between C atoms 2 and 3 of pyruvate and glyceraldehyde 3-phosphate to yield 1-deoxy-D-xylulose-5-phosphate (DXP).</text>
</comment>
<comment type="catalytic activity">
    <reaction evidence="1">
        <text>D-glyceraldehyde 3-phosphate + pyruvate + H(+) = 1-deoxy-D-xylulose 5-phosphate + CO2</text>
        <dbReference type="Rhea" id="RHEA:12605"/>
        <dbReference type="ChEBI" id="CHEBI:15361"/>
        <dbReference type="ChEBI" id="CHEBI:15378"/>
        <dbReference type="ChEBI" id="CHEBI:16526"/>
        <dbReference type="ChEBI" id="CHEBI:57792"/>
        <dbReference type="ChEBI" id="CHEBI:59776"/>
        <dbReference type="EC" id="2.2.1.7"/>
    </reaction>
</comment>
<comment type="cofactor">
    <cofactor evidence="1">
        <name>Mg(2+)</name>
        <dbReference type="ChEBI" id="CHEBI:18420"/>
    </cofactor>
    <text evidence="1">Binds 1 Mg(2+) ion per subunit.</text>
</comment>
<comment type="cofactor">
    <cofactor evidence="1">
        <name>thiamine diphosphate</name>
        <dbReference type="ChEBI" id="CHEBI:58937"/>
    </cofactor>
    <text evidence="1">Binds 1 thiamine pyrophosphate per subunit.</text>
</comment>
<comment type="pathway">
    <text evidence="1">Metabolic intermediate biosynthesis; 1-deoxy-D-xylulose 5-phosphate biosynthesis; 1-deoxy-D-xylulose 5-phosphate from D-glyceraldehyde 3-phosphate and pyruvate: step 1/1.</text>
</comment>
<comment type="subunit">
    <text evidence="1">Homodimer.</text>
</comment>
<comment type="similarity">
    <text evidence="1">Belongs to the transketolase family. DXPS subfamily.</text>
</comment>
<comment type="sequence caution" evidence="2">
    <conflict type="erroneous initiation">
        <sequence resource="EMBL-CDS" id="ABB12322"/>
    </conflict>
</comment>
<feature type="chain" id="PRO_0000256391" description="1-deoxy-D-xylulose-5-phosphate synthase">
    <location>
        <begin position="1"/>
        <end position="634"/>
    </location>
</feature>
<feature type="binding site" evidence="1">
    <location>
        <position position="74"/>
    </location>
    <ligand>
        <name>thiamine diphosphate</name>
        <dbReference type="ChEBI" id="CHEBI:58937"/>
    </ligand>
</feature>
<feature type="binding site" evidence="1">
    <location>
        <begin position="115"/>
        <end position="117"/>
    </location>
    <ligand>
        <name>thiamine diphosphate</name>
        <dbReference type="ChEBI" id="CHEBI:58937"/>
    </ligand>
</feature>
<feature type="binding site" evidence="1">
    <location>
        <position position="146"/>
    </location>
    <ligand>
        <name>Mg(2+)</name>
        <dbReference type="ChEBI" id="CHEBI:18420"/>
    </ligand>
</feature>
<feature type="binding site" evidence="1">
    <location>
        <begin position="147"/>
        <end position="148"/>
    </location>
    <ligand>
        <name>thiamine diphosphate</name>
        <dbReference type="ChEBI" id="CHEBI:58937"/>
    </ligand>
</feature>
<feature type="binding site" evidence="1">
    <location>
        <position position="176"/>
    </location>
    <ligand>
        <name>Mg(2+)</name>
        <dbReference type="ChEBI" id="CHEBI:18420"/>
    </ligand>
</feature>
<feature type="binding site" evidence="1">
    <location>
        <position position="176"/>
    </location>
    <ligand>
        <name>thiamine diphosphate</name>
        <dbReference type="ChEBI" id="CHEBI:58937"/>
    </ligand>
</feature>
<feature type="binding site" evidence="1">
    <location>
        <position position="283"/>
    </location>
    <ligand>
        <name>thiamine diphosphate</name>
        <dbReference type="ChEBI" id="CHEBI:58937"/>
    </ligand>
</feature>
<feature type="binding site" evidence="1">
    <location>
        <position position="365"/>
    </location>
    <ligand>
        <name>thiamine diphosphate</name>
        <dbReference type="ChEBI" id="CHEBI:58937"/>
    </ligand>
</feature>
<gene>
    <name evidence="1" type="primary">dxs</name>
    <name type="ordered locus">Bcep18194_B2211</name>
</gene>
<organism>
    <name type="scientific">Burkholderia lata (strain ATCC 17760 / DSM 23089 / LMG 22485 / NCIMB 9086 / R18194 / 383)</name>
    <dbReference type="NCBI Taxonomy" id="482957"/>
    <lineage>
        <taxon>Bacteria</taxon>
        <taxon>Pseudomonadati</taxon>
        <taxon>Pseudomonadota</taxon>
        <taxon>Betaproteobacteria</taxon>
        <taxon>Burkholderiales</taxon>
        <taxon>Burkholderiaceae</taxon>
        <taxon>Burkholderia</taxon>
        <taxon>Burkholderia cepacia complex</taxon>
    </lineage>
</organism>
<accession>Q393P4</accession>